<keyword id="KW-0965">Cell junction</keyword>
<keyword id="KW-0966">Cell projection</keyword>
<keyword id="KW-0175">Coiled coil</keyword>
<keyword id="KW-0963">Cytoplasm</keyword>
<keyword id="KW-0967">Endosome</keyword>
<keyword id="KW-1017">Isopeptide bond</keyword>
<keyword id="KW-0597">Phosphoprotein</keyword>
<keyword id="KW-1185">Reference proteome</keyword>
<keyword id="KW-0832">Ubl conjugation</keyword>
<keyword id="KW-0879">Wnt signaling pathway</keyword>
<reference evidence="9" key="1">
    <citation type="journal article" date="2005" name="Nature">
        <title>Genome sequence, comparative analysis and haplotype structure of the domestic dog.</title>
        <authorList>
            <person name="Lindblad-Toh K."/>
            <person name="Wade C.M."/>
            <person name="Mikkelsen T.S."/>
            <person name="Karlsson E.K."/>
            <person name="Jaffe D.B."/>
            <person name="Kamal M."/>
            <person name="Clamp M."/>
            <person name="Chang J.L."/>
            <person name="Kulbokas E.J. III"/>
            <person name="Zody M.C."/>
            <person name="Mauceli E."/>
            <person name="Xie X."/>
            <person name="Breen M."/>
            <person name="Wayne R.K."/>
            <person name="Ostrander E.A."/>
            <person name="Ponting C.P."/>
            <person name="Galibert F."/>
            <person name="Smith D.R."/>
            <person name="deJong P.J."/>
            <person name="Kirkness E.F."/>
            <person name="Alvarez P."/>
            <person name="Biagi T."/>
            <person name="Brockman W."/>
            <person name="Butler J."/>
            <person name="Chin C.-W."/>
            <person name="Cook A."/>
            <person name="Cuff J."/>
            <person name="Daly M.J."/>
            <person name="DeCaprio D."/>
            <person name="Gnerre S."/>
            <person name="Grabherr M."/>
            <person name="Kellis M."/>
            <person name="Kleber M."/>
            <person name="Bardeleben C."/>
            <person name="Goodstadt L."/>
            <person name="Heger A."/>
            <person name="Hitte C."/>
            <person name="Kim L."/>
            <person name="Koepfli K.-P."/>
            <person name="Parker H.G."/>
            <person name="Pollinger J.P."/>
            <person name="Searle S.M.J."/>
            <person name="Sutter N.B."/>
            <person name="Thomas R."/>
            <person name="Webber C."/>
            <person name="Baldwin J."/>
            <person name="Abebe A."/>
            <person name="Abouelleil A."/>
            <person name="Aftuck L."/>
            <person name="Ait-Zahra M."/>
            <person name="Aldredge T."/>
            <person name="Allen N."/>
            <person name="An P."/>
            <person name="Anderson S."/>
            <person name="Antoine C."/>
            <person name="Arachchi H."/>
            <person name="Aslam A."/>
            <person name="Ayotte L."/>
            <person name="Bachantsang P."/>
            <person name="Barry A."/>
            <person name="Bayul T."/>
            <person name="Benamara M."/>
            <person name="Berlin A."/>
            <person name="Bessette D."/>
            <person name="Blitshteyn B."/>
            <person name="Bloom T."/>
            <person name="Blye J."/>
            <person name="Boguslavskiy L."/>
            <person name="Bonnet C."/>
            <person name="Boukhgalter B."/>
            <person name="Brown A."/>
            <person name="Cahill P."/>
            <person name="Calixte N."/>
            <person name="Camarata J."/>
            <person name="Cheshatsang Y."/>
            <person name="Chu J."/>
            <person name="Citroen M."/>
            <person name="Collymore A."/>
            <person name="Cooke P."/>
            <person name="Dawoe T."/>
            <person name="Daza R."/>
            <person name="Decktor K."/>
            <person name="DeGray S."/>
            <person name="Dhargay N."/>
            <person name="Dooley K."/>
            <person name="Dooley K."/>
            <person name="Dorje P."/>
            <person name="Dorjee K."/>
            <person name="Dorris L."/>
            <person name="Duffey N."/>
            <person name="Dupes A."/>
            <person name="Egbiremolen O."/>
            <person name="Elong R."/>
            <person name="Falk J."/>
            <person name="Farina A."/>
            <person name="Faro S."/>
            <person name="Ferguson D."/>
            <person name="Ferreira P."/>
            <person name="Fisher S."/>
            <person name="FitzGerald M."/>
            <person name="Foley K."/>
            <person name="Foley C."/>
            <person name="Franke A."/>
            <person name="Friedrich D."/>
            <person name="Gage D."/>
            <person name="Garber M."/>
            <person name="Gearin G."/>
            <person name="Giannoukos G."/>
            <person name="Goode T."/>
            <person name="Goyette A."/>
            <person name="Graham J."/>
            <person name="Grandbois E."/>
            <person name="Gyaltsen K."/>
            <person name="Hafez N."/>
            <person name="Hagopian D."/>
            <person name="Hagos B."/>
            <person name="Hall J."/>
            <person name="Healy C."/>
            <person name="Hegarty R."/>
            <person name="Honan T."/>
            <person name="Horn A."/>
            <person name="Houde N."/>
            <person name="Hughes L."/>
            <person name="Hunnicutt L."/>
            <person name="Husby M."/>
            <person name="Jester B."/>
            <person name="Jones C."/>
            <person name="Kamat A."/>
            <person name="Kanga B."/>
            <person name="Kells C."/>
            <person name="Khazanovich D."/>
            <person name="Kieu A.C."/>
            <person name="Kisner P."/>
            <person name="Kumar M."/>
            <person name="Lance K."/>
            <person name="Landers T."/>
            <person name="Lara M."/>
            <person name="Lee W."/>
            <person name="Leger J.-P."/>
            <person name="Lennon N."/>
            <person name="Leuper L."/>
            <person name="LeVine S."/>
            <person name="Liu J."/>
            <person name="Liu X."/>
            <person name="Lokyitsang Y."/>
            <person name="Lokyitsang T."/>
            <person name="Lui A."/>
            <person name="Macdonald J."/>
            <person name="Major J."/>
            <person name="Marabella R."/>
            <person name="Maru K."/>
            <person name="Matthews C."/>
            <person name="McDonough S."/>
            <person name="Mehta T."/>
            <person name="Meldrim J."/>
            <person name="Melnikov A."/>
            <person name="Meneus L."/>
            <person name="Mihalev A."/>
            <person name="Mihova T."/>
            <person name="Miller K."/>
            <person name="Mittelman R."/>
            <person name="Mlenga V."/>
            <person name="Mulrain L."/>
            <person name="Munson G."/>
            <person name="Navidi A."/>
            <person name="Naylor J."/>
            <person name="Nguyen T."/>
            <person name="Nguyen N."/>
            <person name="Nguyen C."/>
            <person name="Nguyen T."/>
            <person name="Nicol R."/>
            <person name="Norbu N."/>
            <person name="Norbu C."/>
            <person name="Novod N."/>
            <person name="Nyima T."/>
            <person name="Olandt P."/>
            <person name="O'Neill B."/>
            <person name="O'Neill K."/>
            <person name="Osman S."/>
            <person name="Oyono L."/>
            <person name="Patti C."/>
            <person name="Perrin D."/>
            <person name="Phunkhang P."/>
            <person name="Pierre F."/>
            <person name="Priest M."/>
            <person name="Rachupka A."/>
            <person name="Raghuraman S."/>
            <person name="Rameau R."/>
            <person name="Ray V."/>
            <person name="Raymond C."/>
            <person name="Rege F."/>
            <person name="Rise C."/>
            <person name="Rogers J."/>
            <person name="Rogov P."/>
            <person name="Sahalie J."/>
            <person name="Settipalli S."/>
            <person name="Sharpe T."/>
            <person name="Shea T."/>
            <person name="Sheehan M."/>
            <person name="Sherpa N."/>
            <person name="Shi J."/>
            <person name="Shih D."/>
            <person name="Sloan J."/>
            <person name="Smith C."/>
            <person name="Sparrow T."/>
            <person name="Stalker J."/>
            <person name="Stange-Thomann N."/>
            <person name="Stavropoulos S."/>
            <person name="Stone C."/>
            <person name="Stone S."/>
            <person name="Sykes S."/>
            <person name="Tchuinga P."/>
            <person name="Tenzing P."/>
            <person name="Tesfaye S."/>
            <person name="Thoulutsang D."/>
            <person name="Thoulutsang Y."/>
            <person name="Topham K."/>
            <person name="Topping I."/>
            <person name="Tsamla T."/>
            <person name="Vassiliev H."/>
            <person name="Venkataraman V."/>
            <person name="Vo A."/>
            <person name="Wangchuk T."/>
            <person name="Wangdi T."/>
            <person name="Weiand M."/>
            <person name="Wilkinson J."/>
            <person name="Wilson A."/>
            <person name="Yadav S."/>
            <person name="Yang S."/>
            <person name="Yang X."/>
            <person name="Young G."/>
            <person name="Yu Q."/>
            <person name="Zainoun J."/>
            <person name="Zembek L."/>
            <person name="Zimmer A."/>
            <person name="Lander E.S."/>
        </authorList>
    </citation>
    <scope>NUCLEOTIDE SEQUENCE [LARGE SCALE GENOMIC DNA]</scope>
    <source>
        <strain evidence="9">Boxer</strain>
    </source>
</reference>
<reference evidence="8" key="2">
    <citation type="journal article" date="2011" name="Genes Dev.">
        <title>Angiomotin is a novel Hippo pathway component that inhibits YAP oncoprotein.</title>
        <authorList>
            <person name="Zhao B."/>
            <person name="Li L."/>
            <person name="Lu Q."/>
            <person name="Wang L.H."/>
            <person name="Liu C.Y."/>
            <person name="Lei Q."/>
            <person name="Guan K.L."/>
        </authorList>
    </citation>
    <scope>FUNCTION</scope>
    <scope>INTERACTION WITH YAP1</scope>
</reference>
<reference evidence="8" key="3">
    <citation type="journal article" date="2017" name="Sci. Rep.">
        <title>The E-cadherin/AmotL2 complex organizes actin filaments required for epithelial hexagonal packing and blastocyst hatching.</title>
        <authorList>
            <person name="Hildebrand S."/>
            <person name="Hultin S."/>
            <person name="Subramani A."/>
            <person name="Petropoulos S."/>
            <person name="Zhang Y."/>
            <person name="Cao X."/>
            <person name="Mpindi J."/>
            <person name="Kalloniemi O."/>
            <person name="Johansson S."/>
            <person name="Majumdar A."/>
            <person name="Lanner F."/>
            <person name="Holmgren L."/>
        </authorList>
    </citation>
    <scope>FUNCTION</scope>
    <scope>INTERACTION WITH CDH1; MAGI1 AND ACTB</scope>
</reference>
<proteinExistence type="evidence at protein level"/>
<organism evidence="10">
    <name type="scientific">Canis lupus familiaris</name>
    <name type="common">Dog</name>
    <name type="synonym">Canis familiaris</name>
    <dbReference type="NCBI Taxonomy" id="9615"/>
    <lineage>
        <taxon>Eukaryota</taxon>
        <taxon>Metazoa</taxon>
        <taxon>Chordata</taxon>
        <taxon>Craniata</taxon>
        <taxon>Vertebrata</taxon>
        <taxon>Euteleostomi</taxon>
        <taxon>Mammalia</taxon>
        <taxon>Eutheria</taxon>
        <taxon>Laurasiatheria</taxon>
        <taxon>Carnivora</taxon>
        <taxon>Caniformia</taxon>
        <taxon>Canidae</taxon>
        <taxon>Canis</taxon>
    </lineage>
</organism>
<accession>A0A8I3QA39</accession>
<accession>A0A8P0SC30</accession>
<name>AMOL2_CANLF</name>
<feature type="chain" id="PRO_0000460817" description="Angiomotin-like protein 2">
    <location>
        <begin position="1"/>
        <end position="776"/>
    </location>
</feature>
<feature type="region of interest" description="Disordered" evidence="5">
    <location>
        <begin position="41"/>
        <end position="88"/>
    </location>
</feature>
<feature type="region of interest" description="Required for interaction with CDH5" evidence="2">
    <location>
        <begin position="101"/>
        <end position="307"/>
    </location>
</feature>
<feature type="region of interest" description="Disordered" evidence="5">
    <location>
        <begin position="119"/>
        <end position="142"/>
    </location>
</feature>
<feature type="region of interest" description="Disordered" evidence="5">
    <location>
        <begin position="169"/>
        <end position="215"/>
    </location>
</feature>
<feature type="region of interest" description="Required for interaction with CDH1" evidence="3">
    <location>
        <begin position="220"/>
        <end position="307"/>
    </location>
</feature>
<feature type="region of interest" description="Disordered" evidence="5">
    <location>
        <begin position="283"/>
        <end position="309"/>
    </location>
</feature>
<feature type="region of interest" description="Disordered" evidence="5">
    <location>
        <begin position="591"/>
        <end position="620"/>
    </location>
</feature>
<feature type="region of interest" description="Disordered" evidence="5">
    <location>
        <begin position="677"/>
        <end position="743"/>
    </location>
</feature>
<feature type="coiled-coil region" evidence="4">
    <location>
        <begin position="314"/>
        <end position="509"/>
    </location>
</feature>
<feature type="coiled-coil region" evidence="4">
    <location>
        <begin position="543"/>
        <end position="570"/>
    </location>
</feature>
<feature type="short sequence motif" description="PDZ-binding" evidence="3">
    <location>
        <begin position="773"/>
        <end position="776"/>
    </location>
</feature>
<feature type="compositionally biased region" description="Polar residues" evidence="5">
    <location>
        <begin position="177"/>
        <end position="192"/>
    </location>
</feature>
<feature type="compositionally biased region" description="Pro residues" evidence="5">
    <location>
        <begin position="196"/>
        <end position="213"/>
    </location>
</feature>
<feature type="compositionally biased region" description="Polar residues" evidence="5">
    <location>
        <begin position="297"/>
        <end position="306"/>
    </location>
</feature>
<feature type="compositionally biased region" description="Polar residues" evidence="5">
    <location>
        <begin position="678"/>
        <end position="687"/>
    </location>
</feature>
<feature type="site" description="Required for interaction with MAGI1 and ACTB" evidence="2">
    <location>
        <position position="107"/>
    </location>
</feature>
<feature type="site" description="Required for interaction with YAP1 and ubiquitination at K-347 and K-408" evidence="3">
    <location>
        <position position="213"/>
    </location>
</feature>
<feature type="modified residue" description="Phosphotyrosine" evidence="1">
    <location>
        <position position="107"/>
    </location>
</feature>
<feature type="modified residue" description="Phosphoserine" evidence="3">
    <location>
        <position position="756"/>
    </location>
</feature>
<feature type="modified residue" description="Phosphoserine" evidence="2">
    <location>
        <position position="759"/>
    </location>
</feature>
<feature type="cross-link" description="Glycyl lysine isopeptide (Lys-Gly) (interchain with G-Cter in ubiquitin)" evidence="3">
    <location>
        <position position="347"/>
    </location>
</feature>
<feature type="cross-link" description="Glycyl lysine isopeptide (Lys-Gly) (interchain with G-Cter in ubiquitin)" evidence="3">
    <location>
        <position position="408"/>
    </location>
</feature>
<gene>
    <name evidence="3" type="primary">AMOTL2</name>
</gene>
<protein>
    <recommendedName>
        <fullName evidence="8">Angiomotin-like protein 2</fullName>
    </recommendedName>
</protein>
<comment type="function">
    <text evidence="2 3 6 7">Regulates the translocation of phosphorylated SRC to peripheral cell-matrix adhesion sites. Required for proper architecture of actin filaments. Plays a role in coupling actin fibers to cell junctions in endothelial cells and is therefore required for correct endothelial cell morphology via facilitating transcellular transmission of mechanical force resulting in endothelial cell elongation (By similarity). Required for the anchoring of radial actin fibers to CDH1 junction complexes at the cell membrane which facilitates organization of radial actin fiber structure and cellular response to contractile forces (PubMed:28842668). This contributes to maintenance of cell area, size, shape, epithelial sheet organization and trophectoderm cell properties that facilitate blastocyst zona hatching (By similarity). Inhibits the Wnt/beta-catenin signaling pathway, probably by recruiting CTNNB1 to recycling endosomes and hence preventing its translocation to the nucleus. Participates in angiogenesis. Activates the Hippo signaling pathway in response to cell contact inhibition via interaction with and ubiquitination by Crumbs complex-bound WWP1 (By similarity). Ubiquitinated AMOTL2 then interacts with LATS2 which in turn phosphorylates YAP1, excluding it from the nucleus and localizing it to the cytoplasm and tight junctions, therefore ultimately repressing YAP1-driven transcription of target genes (PubMed:21205866). Acts to inhibit WWTR1/TAZ transcriptional coactivator activity via sequestering WWTR1/TAZ in the cytoplasm and at tight junctions (PubMed:21205866). Regulates the size and protein composition of the podosome cortex and core at myofibril neuromuscular junctions (By similarity). Selectively promotes FGF-induced MAPK activation through SRC. May play a role in the polarity, proliferation and migration of endothelial cells.</text>
</comment>
<comment type="subunit">
    <text evidence="2 3 6 7">Part of a complex composed of AMOTL2, MAGI1 and CDH5, within the complex AMOTL2 acts as a scaffold protein for the interaction of MAGI1 with CDH5 (By similarity). The complex is required for coupling actin fibers to cell junctions in endothelial cells (By similarity). Within the complex AMOTL2 (via its N-terminus) interacts with CDH5 (By similarity). Interacts (via N-terminus) with MAGI1 (PubMed:28842668). Interacts (via N-terminus) with ACTB; the interaction facilitates binding of cell junction complexes to actin fibers in endothelial cells (PubMed:28842668). Interacts with CDH1; the interaction may facilitate binding of radial actin fibers to cell junction complexes (PubMed:28842668). Interacts with SRC (By similarity). Interacts with YAP1; the interaction is required for ubiquitination of AMOTL2 and localization of YAP1 to tight junctions (PubMed:21205866). Interacts with WWP1; the interaction facilitates WWP1 interaction with the Crumbs complex and subsequent WWP1 translocation to the plasma membrane (By similarity). WPP1 interaction with the Crumbs complex promotes WPP1 monoubiquitination of AMOTL2 which subsequently activates the Hippo signaling pathway (By similarity). When ubiquitinated interacts with LATS2 (via UBA domain); the interaction promotes LATS2 phosphorylation of YAP1 (By similarity). Interacts (via PPXY motif) with WWTR1/TAZ (via WW domain); the interaction promotes WWTR1/TAZ localization to the cytoplasm and thereby inhibition of its transcriptional properties (By similarity). Interacts with PHLDB2; interaction may facilitate PHLDB2 localization to the myotube podosome cortex that surrounds the core (By similarity).</text>
</comment>
<comment type="subcellular location">
    <subcellularLocation>
        <location>Recycling endosome</location>
    </subcellularLocation>
    <subcellularLocation>
        <location evidence="3">Cytoplasm</location>
    </subcellularLocation>
    <subcellularLocation>
        <location evidence="2">Cell projection</location>
        <location evidence="2">Podosome</location>
    </subcellularLocation>
    <subcellularLocation>
        <location evidence="2">Cell junction</location>
    </subcellularLocation>
</comment>
<comment type="PTM">
    <text evidence="3">Monoubiquitinated at Lys-347 and Lys-408 by Crumbs complex-bound WWP1 (By similarity). De-ubiquitinated at Lys-347 and Lys-408 by USP9X; the interaction may be promoted by cell contact inhibition (By similarity). Deubiquitination of AMOTL2 negatively regulates Hippo signaling activation (By similarity).</text>
</comment>
<comment type="PTM">
    <text evidence="1">Phosphorylation at Tyr-107 is necessary for efficient binding to SRC and synergistically functioning with SRC to activate the downstream MAPK pathway.</text>
</comment>
<comment type="similarity">
    <text evidence="8">Belongs to the angiomotin family.</text>
</comment>
<evidence type="ECO:0000250" key="1">
    <source>
        <dbReference type="UniProtKB" id="A1YB07"/>
    </source>
</evidence>
<evidence type="ECO:0000250" key="2">
    <source>
        <dbReference type="UniProtKB" id="Q8K371"/>
    </source>
</evidence>
<evidence type="ECO:0000250" key="3">
    <source>
        <dbReference type="UniProtKB" id="Q9Y2J4"/>
    </source>
</evidence>
<evidence type="ECO:0000255" key="4"/>
<evidence type="ECO:0000256" key="5">
    <source>
        <dbReference type="SAM" id="MobiDB-lite"/>
    </source>
</evidence>
<evidence type="ECO:0000269" key="6">
    <source>
    </source>
</evidence>
<evidence type="ECO:0000269" key="7">
    <source>
    </source>
</evidence>
<evidence type="ECO:0000305" key="8"/>
<evidence type="ECO:0000312" key="9">
    <source>
        <dbReference type="Proteomes" id="UP000002254"/>
    </source>
</evidence>
<evidence type="ECO:0000312" key="10">
    <source>
        <dbReference type="Proteomes" id="UP000805418"/>
    </source>
</evidence>
<dbReference type="RefSeq" id="XP_013962197.1">
    <property type="nucleotide sequence ID" value="XM_014106722.3"/>
</dbReference>
<dbReference type="RefSeq" id="XP_038288321.1">
    <property type="nucleotide sequence ID" value="XM_038432393.1"/>
</dbReference>
<dbReference type="RefSeq" id="XP_038426860.1">
    <property type="nucleotide sequence ID" value="XM_038570932.1"/>
</dbReference>
<dbReference type="SMR" id="A0A8I3QA39"/>
<dbReference type="FunCoup" id="A0A8I3QA39">
    <property type="interactions" value="213"/>
</dbReference>
<dbReference type="Ensembl" id="ENSCAFT00805036665">
    <property type="protein sequence ID" value="ENSCAFP00805028740"/>
    <property type="gene ID" value="ENSCAFG00805020262"/>
</dbReference>
<dbReference type="Ensembl" id="ENSCAFT00845053762.1">
    <property type="protein sequence ID" value="ENSCAFP00845042250.1"/>
    <property type="gene ID" value="ENSCAFG00845030294.1"/>
</dbReference>
<dbReference type="GeneID" id="485669"/>
<dbReference type="KEGG" id="cfa:485669"/>
<dbReference type="CTD" id="51421"/>
<dbReference type="GeneTree" id="ENSGT00940000156577"/>
<dbReference type="OrthoDB" id="5974715at2759"/>
<dbReference type="Reactome" id="R-CFA-2028269">
    <property type="pathway name" value="Signaling by Hippo"/>
</dbReference>
<dbReference type="Proteomes" id="UP000002254">
    <property type="component" value="Unplaced"/>
</dbReference>
<dbReference type="Proteomes" id="UP000694429">
    <property type="component" value="Unplaced"/>
</dbReference>
<dbReference type="Proteomes" id="UP000694542">
    <property type="component" value="Unplaced"/>
</dbReference>
<dbReference type="Proteomes" id="UP000805418">
    <property type="component" value="Chromosome 23"/>
</dbReference>
<dbReference type="GO" id="GO:0005923">
    <property type="term" value="C:bicellular tight junction"/>
    <property type="evidence" value="ECO:0000318"/>
    <property type="project" value="GO_Central"/>
</dbReference>
<dbReference type="GO" id="GO:0042995">
    <property type="term" value="C:cell projection"/>
    <property type="evidence" value="ECO:0007669"/>
    <property type="project" value="UniProtKB-KW"/>
</dbReference>
<dbReference type="GO" id="GO:0031410">
    <property type="term" value="C:cytoplasmic vesicle"/>
    <property type="evidence" value="ECO:0000318"/>
    <property type="project" value="GO_Central"/>
</dbReference>
<dbReference type="GO" id="GO:0005886">
    <property type="term" value="C:plasma membrane"/>
    <property type="evidence" value="ECO:0000318"/>
    <property type="project" value="GO_Central"/>
</dbReference>
<dbReference type="GO" id="GO:0002102">
    <property type="term" value="C:podosome"/>
    <property type="evidence" value="ECO:0007669"/>
    <property type="project" value="UniProtKB-SubCell"/>
</dbReference>
<dbReference type="GO" id="GO:0055037">
    <property type="term" value="C:recycling endosome"/>
    <property type="evidence" value="ECO:0007669"/>
    <property type="project" value="UniProtKB-SubCell"/>
</dbReference>
<dbReference type="GO" id="GO:0030036">
    <property type="term" value="P:actin cytoskeleton organization"/>
    <property type="evidence" value="ECO:0000318"/>
    <property type="project" value="GO_Central"/>
</dbReference>
<dbReference type="GO" id="GO:0001525">
    <property type="term" value="P:angiogenesis"/>
    <property type="evidence" value="ECO:0000318"/>
    <property type="project" value="GO_Central"/>
</dbReference>
<dbReference type="GO" id="GO:0003365">
    <property type="term" value="P:establishment of cell polarity involved in ameboidal cell migration"/>
    <property type="evidence" value="ECO:0000318"/>
    <property type="project" value="GO_Central"/>
</dbReference>
<dbReference type="GO" id="GO:0035329">
    <property type="term" value="P:hippo signaling"/>
    <property type="evidence" value="ECO:0000315"/>
    <property type="project" value="MGI"/>
</dbReference>
<dbReference type="GO" id="GO:0000122">
    <property type="term" value="P:negative regulation of transcription by RNA polymerase II"/>
    <property type="evidence" value="ECO:0000315"/>
    <property type="project" value="UniProtKB"/>
</dbReference>
<dbReference type="GO" id="GO:1903829">
    <property type="term" value="P:positive regulation of protein localization"/>
    <property type="evidence" value="ECO:0000315"/>
    <property type="project" value="UniProtKB"/>
</dbReference>
<dbReference type="GO" id="GO:0030334">
    <property type="term" value="P:regulation of cell migration"/>
    <property type="evidence" value="ECO:0000318"/>
    <property type="project" value="GO_Central"/>
</dbReference>
<dbReference type="GO" id="GO:0016055">
    <property type="term" value="P:Wnt signaling pathway"/>
    <property type="evidence" value="ECO:0007669"/>
    <property type="project" value="UniProtKB-KW"/>
</dbReference>
<dbReference type="InterPro" id="IPR009114">
    <property type="entry name" value="Angiomotin"/>
</dbReference>
<dbReference type="InterPro" id="IPR051747">
    <property type="entry name" value="Angiomotin-like"/>
</dbReference>
<dbReference type="InterPro" id="IPR024646">
    <property type="entry name" value="Angiomotin_C"/>
</dbReference>
<dbReference type="PANTHER" id="PTHR14826">
    <property type="entry name" value="ANGIOMOTIN"/>
    <property type="match status" value="1"/>
</dbReference>
<dbReference type="PANTHER" id="PTHR14826:SF3">
    <property type="entry name" value="ANGIOMOTIN-LIKE PROTEIN 2"/>
    <property type="match status" value="1"/>
</dbReference>
<dbReference type="Pfam" id="PF12240">
    <property type="entry name" value="Angiomotin_C"/>
    <property type="match status" value="1"/>
</dbReference>
<dbReference type="PRINTS" id="PR01807">
    <property type="entry name" value="ANGIOMOTIN"/>
</dbReference>
<sequence>MRTLEDSSGTVLHRLIQEQLRYGNLTETRTLLAIQQQALRGGAGAGGTGSPQASAEILAPEDTQVLQQATRQEPQGQEHQGGESHLAENTLYRLCPQPGKGEELPTYEEAKAHSQYYAAQQAGPRPHVGDRDPRGAPGGHRSQDEALRELRHGHVRSLSERLLQLSLERNGARAPSHMSSSHSFPQLARNQQGPAPRGPPAEGPEPRGPPPQYPHVVLAHETATAVTDPRYRTRGSPHFQHAEVRILQAQVPPVFLQQQQQYQYLQQPQEHPLPPHPAVLSHGPLGALSPPEVEGPASTQTSSAPSGSAHLAQMETLLRENARLQRDNERLQRELESSAEKAGRIEKLEGEIQRLSEAHESLMRASSKREALEKTMRNKMDSEMRRLQDFNRDLRERLESANRRLASKTQEAQAGSQDMVAKLLAQSYEQQQEQEKLEREMALLRGAIEDQRRRAELLEQALSNAQGRAARAEEELRKKQAYVEKVERLQQALGQLQAACEKRELLELRLRTRLEQELKALRAQQRQAGTPTGASGGSPELSALRLSEQLREKEEQILALEADMTKWEQKYLEERAMRQFAMDAAATAAAQRDTTLIRHSPQPSPSSSFNEGLLTGGHRHQEMESRLKVLHAQILEKDAVIKVLQQRSRKDPGKATQGSLRPAKSVPSVFVAAAAGTQGWQSLSSSERPADAPARLATDRAPEEEPVAAAPLPAHAKHGSRDGSTQTDGPTEGASACLGLDPDSLLGYSGGQRTASLDSVAASRVQDLSDMVEILI</sequence>